<name>SIR2_EREGS</name>
<sequence>MSESASMLQGSKRGTDSSVDVGGAKRTKVDMDDGSSSNNDEKELLEATKADELDEVVDDYAEQNDHSAQEVAGEYVPKKPEQPIMLTKDSNSGKYVFPPISKEDSLNARYFLKYHGSAQFLDSYLPEDLNSLYVFHLIKLLGFQLKDRELLTAVQKAVQNDVTSGVSSVVGTNPMVERVSPPQLSASTPSGDGYDDPLEKKHAVRLIKDLQKAMNKVLSTRIRLANFFTLDHFISKLKSAKKVLVLTGAGISTSLGIPDFRSSKGFYSQVTNLGLDDPQDVFNLDIFMENPSVFYTIAEKILPPEHKFSPLHSFIKMIQDKGKLLRNYTQNIDNLESYAGIFKENIVQCHGSFATASCVTCHLKMPGERIFQQIKDREIPLCAYCYPKRQEEYPTVSDDPGTKNGQQSSHNSSSIFHMSRSFGVIKPDITFFGEALPLEFHTNIRQDVLQCDLLICIGTSLKVAPVSEIVNMVPAHVPQVLINRDPVKHAEFDLTLLGLCDDVAAFIAQKCGWDIPHENWPQLKQRNIQYDELERGMYYVYDPVKEQAKDTGQRQVQAP</sequence>
<accession>Q757M7</accession>
<dbReference type="EC" id="2.3.1.286" evidence="2"/>
<dbReference type="EMBL" id="AE016818">
    <property type="protein sequence ID" value="AAS52672.1"/>
    <property type="molecule type" value="Genomic_DNA"/>
</dbReference>
<dbReference type="RefSeq" id="NP_984848.1">
    <property type="nucleotide sequence ID" value="NM_210202.1"/>
</dbReference>
<dbReference type="SMR" id="Q757M7"/>
<dbReference type="FunCoup" id="Q757M7">
    <property type="interactions" value="334"/>
</dbReference>
<dbReference type="STRING" id="284811.Q757M7"/>
<dbReference type="EnsemblFungi" id="AAS52672">
    <property type="protein sequence ID" value="AAS52672"/>
    <property type="gene ID" value="AGOS_AEL013C"/>
</dbReference>
<dbReference type="GeneID" id="4621047"/>
<dbReference type="KEGG" id="ago:AGOS_AEL013C"/>
<dbReference type="eggNOG" id="KOG2684">
    <property type="taxonomic scope" value="Eukaryota"/>
</dbReference>
<dbReference type="HOGENOM" id="CLU_023643_5_0_1"/>
<dbReference type="InParanoid" id="Q757M7"/>
<dbReference type="OMA" id="MFLKYYG"/>
<dbReference type="OrthoDB" id="420264at2759"/>
<dbReference type="Proteomes" id="UP000000591">
    <property type="component" value="Chromosome V"/>
</dbReference>
<dbReference type="GO" id="GO:0005634">
    <property type="term" value="C:nucleus"/>
    <property type="evidence" value="ECO:0000318"/>
    <property type="project" value="GO_Central"/>
</dbReference>
<dbReference type="GO" id="GO:0034967">
    <property type="term" value="C:Set3 complex"/>
    <property type="evidence" value="ECO:0007669"/>
    <property type="project" value="EnsemblFungi"/>
</dbReference>
<dbReference type="GO" id="GO:0046970">
    <property type="term" value="F:histone H4K16 deacetylase activity, NAD-dependent"/>
    <property type="evidence" value="ECO:0000318"/>
    <property type="project" value="GO_Central"/>
</dbReference>
<dbReference type="GO" id="GO:0046872">
    <property type="term" value="F:metal ion binding"/>
    <property type="evidence" value="ECO:0007669"/>
    <property type="project" value="UniProtKB-KW"/>
</dbReference>
<dbReference type="GO" id="GO:0070403">
    <property type="term" value="F:NAD+ binding"/>
    <property type="evidence" value="ECO:0000318"/>
    <property type="project" value="GO_Central"/>
</dbReference>
<dbReference type="GO" id="GO:0031507">
    <property type="term" value="P:heterochromatin formation"/>
    <property type="evidence" value="ECO:0000318"/>
    <property type="project" value="GO_Central"/>
</dbReference>
<dbReference type="GO" id="GO:0045835">
    <property type="term" value="P:negative regulation of meiotic nuclear division"/>
    <property type="evidence" value="ECO:0007669"/>
    <property type="project" value="EnsemblFungi"/>
</dbReference>
<dbReference type="GO" id="GO:0045950">
    <property type="term" value="P:negative regulation of mitotic recombination"/>
    <property type="evidence" value="ECO:0007669"/>
    <property type="project" value="EnsemblFungi"/>
</dbReference>
<dbReference type="GO" id="GO:0070623">
    <property type="term" value="P:regulation of thiamine biosynthetic process"/>
    <property type="evidence" value="ECO:0007669"/>
    <property type="project" value="EnsemblFungi"/>
</dbReference>
<dbReference type="GO" id="GO:0030466">
    <property type="term" value="P:silent mating-type cassette heterochromatin formation"/>
    <property type="evidence" value="ECO:0007669"/>
    <property type="project" value="EnsemblFungi"/>
</dbReference>
<dbReference type="FunFam" id="1.20.120.1710:FF:000001">
    <property type="entry name" value="NAD-dependent histone deacetylase SIR2"/>
    <property type="match status" value="1"/>
</dbReference>
<dbReference type="Gene3D" id="1.20.120.1710">
    <property type="match status" value="1"/>
</dbReference>
<dbReference type="Gene3D" id="3.30.1600.10">
    <property type="entry name" value="SIR2/SIRT2 'Small Domain"/>
    <property type="match status" value="1"/>
</dbReference>
<dbReference type="Gene3D" id="3.40.50.1220">
    <property type="entry name" value="TPP-binding domain"/>
    <property type="match status" value="1"/>
</dbReference>
<dbReference type="InterPro" id="IPR029035">
    <property type="entry name" value="DHS-like_NAD/FAD-binding_dom"/>
</dbReference>
<dbReference type="InterPro" id="IPR007654">
    <property type="entry name" value="NAD-dep_histone_deAcase_SIR2_N"/>
</dbReference>
<dbReference type="InterPro" id="IPR050134">
    <property type="entry name" value="NAD-dep_sirtuin_deacylases"/>
</dbReference>
<dbReference type="InterPro" id="IPR003000">
    <property type="entry name" value="Sirtuin"/>
</dbReference>
<dbReference type="InterPro" id="IPR026591">
    <property type="entry name" value="Sirtuin_cat_small_dom_sf"/>
</dbReference>
<dbReference type="InterPro" id="IPR026590">
    <property type="entry name" value="Ssirtuin_cat_dom"/>
</dbReference>
<dbReference type="PANTHER" id="PTHR11085:SF9">
    <property type="entry name" value="NAD-DEPENDENT PROTEIN DEACETYLASE SIRTUIN-1"/>
    <property type="match status" value="1"/>
</dbReference>
<dbReference type="PANTHER" id="PTHR11085">
    <property type="entry name" value="NAD-DEPENDENT PROTEIN DEACYLASE SIRTUIN-5, MITOCHONDRIAL-RELATED"/>
    <property type="match status" value="1"/>
</dbReference>
<dbReference type="Pfam" id="PF04574">
    <property type="entry name" value="DUF592"/>
    <property type="match status" value="1"/>
</dbReference>
<dbReference type="Pfam" id="PF02146">
    <property type="entry name" value="SIR2"/>
    <property type="match status" value="1"/>
</dbReference>
<dbReference type="SUPFAM" id="SSF52467">
    <property type="entry name" value="DHS-like NAD/FAD-binding domain"/>
    <property type="match status" value="1"/>
</dbReference>
<dbReference type="PROSITE" id="PS50305">
    <property type="entry name" value="SIRTUIN"/>
    <property type="match status" value="1"/>
</dbReference>
<protein>
    <recommendedName>
        <fullName>NAD-dependent histone deacetylase SIR2</fullName>
        <ecNumber evidence="2">2.3.1.286</ecNumber>
    </recommendedName>
    <alternativeName>
        <fullName>Regulatory protein SIR2</fullName>
    </alternativeName>
    <alternativeName>
        <fullName>Silent information regulator 2</fullName>
    </alternativeName>
</protein>
<keyword id="KW-0479">Metal-binding</keyword>
<keyword id="KW-0520">NAD</keyword>
<keyword id="KW-0539">Nucleus</keyword>
<keyword id="KW-1185">Reference proteome</keyword>
<keyword id="KW-0678">Repressor</keyword>
<keyword id="KW-0804">Transcription</keyword>
<keyword id="KW-0805">Transcription regulation</keyword>
<keyword id="KW-0808">Transferase</keyword>
<keyword id="KW-0862">Zinc</keyword>
<evidence type="ECO:0000250" key="1"/>
<evidence type="ECO:0000255" key="2">
    <source>
        <dbReference type="PROSITE-ProRule" id="PRU00236"/>
    </source>
</evidence>
<evidence type="ECO:0000256" key="3">
    <source>
        <dbReference type="SAM" id="MobiDB-lite"/>
    </source>
</evidence>
<evidence type="ECO:0000305" key="4"/>
<proteinExistence type="inferred from homology"/>
<organism>
    <name type="scientific">Eremothecium gossypii (strain ATCC 10895 / CBS 109.51 / FGSC 9923 / NRRL Y-1056)</name>
    <name type="common">Yeast</name>
    <name type="synonym">Ashbya gossypii</name>
    <dbReference type="NCBI Taxonomy" id="284811"/>
    <lineage>
        <taxon>Eukaryota</taxon>
        <taxon>Fungi</taxon>
        <taxon>Dikarya</taxon>
        <taxon>Ascomycota</taxon>
        <taxon>Saccharomycotina</taxon>
        <taxon>Saccharomycetes</taxon>
        <taxon>Saccharomycetales</taxon>
        <taxon>Saccharomycetaceae</taxon>
        <taxon>Eremothecium</taxon>
    </lineage>
</organism>
<gene>
    <name type="primary">SIR2</name>
    <name type="ordered locus">AEL013C</name>
</gene>
<reference key="1">
    <citation type="journal article" date="2004" name="Science">
        <title>The Ashbya gossypii genome as a tool for mapping the ancient Saccharomyces cerevisiae genome.</title>
        <authorList>
            <person name="Dietrich F.S."/>
            <person name="Voegeli S."/>
            <person name="Brachat S."/>
            <person name="Lerch A."/>
            <person name="Gates K."/>
            <person name="Steiner S."/>
            <person name="Mohr C."/>
            <person name="Poehlmann R."/>
            <person name="Luedi P."/>
            <person name="Choi S."/>
            <person name="Wing R.A."/>
            <person name="Flavier A."/>
            <person name="Gaffney T.D."/>
            <person name="Philippsen P."/>
        </authorList>
    </citation>
    <scope>NUCLEOTIDE SEQUENCE [LARGE SCALE GENOMIC DNA]</scope>
    <source>
        <strain>ATCC 10895 / CBS 109.51 / FGSC 9923 / NRRL Y-1056</strain>
    </source>
</reference>
<reference key="2">
    <citation type="journal article" date="2013" name="G3 (Bethesda)">
        <title>Genomes of Ashbya fungi isolated from insects reveal four mating-type loci, numerous translocations, lack of transposons, and distinct gene duplications.</title>
        <authorList>
            <person name="Dietrich F.S."/>
            <person name="Voegeli S."/>
            <person name="Kuo S."/>
            <person name="Philippsen P."/>
        </authorList>
    </citation>
    <scope>GENOME REANNOTATION</scope>
    <source>
        <strain>ATCC 10895 / CBS 109.51 / FGSC 9923 / NRRL Y-1056</strain>
    </source>
</reference>
<comment type="function">
    <text evidence="1">NAD-dependent deacetylase. Heterochromatin component that silences transcription at silent mating loci, telomeres and the ribosomal DNA, and that also suppresses recombination in the rDNA and extends replicative life span. It acts as a NAD-dependent histone deacetylase, which deacetylates 'Lys-9' and 'Lys-14' of Histone H3 and 'Lys-16' of Histone H4 (By similarity).</text>
</comment>
<comment type="catalytic activity">
    <reaction evidence="2">
        <text>N(6)-acetyl-L-lysyl-[protein] + NAD(+) + H2O = 2''-O-acetyl-ADP-D-ribose + nicotinamide + L-lysyl-[protein]</text>
        <dbReference type="Rhea" id="RHEA:43636"/>
        <dbReference type="Rhea" id="RHEA-COMP:9752"/>
        <dbReference type="Rhea" id="RHEA-COMP:10731"/>
        <dbReference type="ChEBI" id="CHEBI:15377"/>
        <dbReference type="ChEBI" id="CHEBI:17154"/>
        <dbReference type="ChEBI" id="CHEBI:29969"/>
        <dbReference type="ChEBI" id="CHEBI:57540"/>
        <dbReference type="ChEBI" id="CHEBI:61930"/>
        <dbReference type="ChEBI" id="CHEBI:83767"/>
        <dbReference type="EC" id="2.3.1.286"/>
    </reaction>
</comment>
<comment type="cofactor">
    <cofactor evidence="1">
        <name>Zn(2+)</name>
        <dbReference type="ChEBI" id="CHEBI:29105"/>
    </cofactor>
    <text evidence="1">Binds 1 zinc ion per subunit.</text>
</comment>
<comment type="subcellular location">
    <subcellularLocation>
        <location evidence="1">Nucleus</location>
    </subcellularLocation>
</comment>
<comment type="similarity">
    <text evidence="4">Belongs to the sirtuin family. Class I subfamily.</text>
</comment>
<feature type="chain" id="PRO_0000110274" description="NAD-dependent histone deacetylase SIR2">
    <location>
        <begin position="1"/>
        <end position="559"/>
    </location>
</feature>
<feature type="domain" description="Deacetylase sirtuin-type" evidence="2">
    <location>
        <begin position="223"/>
        <end position="514"/>
    </location>
</feature>
<feature type="region of interest" description="Disordered" evidence="3">
    <location>
        <begin position="1"/>
        <end position="73"/>
    </location>
</feature>
<feature type="compositionally biased region" description="Basic and acidic residues" evidence="3">
    <location>
        <begin position="39"/>
        <end position="51"/>
    </location>
</feature>
<feature type="compositionally biased region" description="Acidic residues" evidence="3">
    <location>
        <begin position="52"/>
        <end position="62"/>
    </location>
</feature>
<feature type="active site" description="Proton acceptor" evidence="2">
    <location>
        <position position="350"/>
    </location>
</feature>
<feature type="binding site" evidence="1">
    <location>
        <begin position="248"/>
        <end position="267"/>
    </location>
    <ligand>
        <name>NAD(+)</name>
        <dbReference type="ChEBI" id="CHEBI:57540"/>
    </ligand>
</feature>
<feature type="binding site" evidence="1">
    <location>
        <begin position="330"/>
        <end position="333"/>
    </location>
    <ligand>
        <name>NAD(+)</name>
        <dbReference type="ChEBI" id="CHEBI:57540"/>
    </ligand>
</feature>
<feature type="binding site" evidence="2">
    <location>
        <position position="358"/>
    </location>
    <ligand>
        <name>Zn(2+)</name>
        <dbReference type="ChEBI" id="CHEBI:29105"/>
    </ligand>
</feature>
<feature type="binding site" evidence="2">
    <location>
        <position position="361"/>
    </location>
    <ligand>
        <name>Zn(2+)</name>
        <dbReference type="ChEBI" id="CHEBI:29105"/>
    </ligand>
</feature>
<feature type="binding site" evidence="2">
    <location>
        <position position="382"/>
    </location>
    <ligand>
        <name>Zn(2+)</name>
        <dbReference type="ChEBI" id="CHEBI:29105"/>
    </ligand>
</feature>
<feature type="binding site" evidence="2">
    <location>
        <position position="385"/>
    </location>
    <ligand>
        <name>Zn(2+)</name>
        <dbReference type="ChEBI" id="CHEBI:29105"/>
    </ligand>
</feature>
<feature type="binding site" evidence="1">
    <location>
        <begin position="458"/>
        <end position="460"/>
    </location>
    <ligand>
        <name>NAD(+)</name>
        <dbReference type="ChEBI" id="CHEBI:57540"/>
    </ligand>
</feature>
<feature type="binding site" evidence="1">
    <location>
        <begin position="483"/>
        <end position="485"/>
    </location>
    <ligand>
        <name>NAD(+)</name>
        <dbReference type="ChEBI" id="CHEBI:57540"/>
    </ligand>
</feature>
<feature type="binding site" evidence="1">
    <location>
        <position position="500"/>
    </location>
    <ligand>
        <name>NAD(+)</name>
        <dbReference type="ChEBI" id="CHEBI:57540"/>
    </ligand>
</feature>